<accession>Q9FIK8</accession>
<evidence type="ECO:0000250" key="1">
    <source>
        <dbReference type="UniProtKB" id="Q9FHP6"/>
    </source>
</evidence>
<evidence type="ECO:0000250" key="2">
    <source>
        <dbReference type="UniProtKB" id="Q9LVH4"/>
    </source>
</evidence>
<evidence type="ECO:0000250" key="3">
    <source>
        <dbReference type="UniProtKB" id="Q9SSL1"/>
    </source>
</evidence>
<evidence type="ECO:0000255" key="4">
    <source>
        <dbReference type="PROSITE-ProRule" id="PRU00041"/>
    </source>
</evidence>
<evidence type="ECO:0000305" key="5"/>
<evidence type="ECO:0000312" key="6">
    <source>
        <dbReference type="Araport" id="AT5G47710"/>
    </source>
</evidence>
<evidence type="ECO:0000312" key="7">
    <source>
        <dbReference type="Proteomes" id="UP000006548"/>
    </source>
</evidence>
<evidence type="ECO:0007744" key="8">
    <source>
    </source>
</evidence>
<keyword id="KW-0938">Abscisic acid signaling pathway</keyword>
<keyword id="KW-0007">Acetylation</keyword>
<keyword id="KW-0106">Calcium</keyword>
<keyword id="KW-1003">Cell membrane</keyword>
<keyword id="KW-0343">GTPase activation</keyword>
<keyword id="KW-0446">Lipid-binding</keyword>
<keyword id="KW-0472">Membrane</keyword>
<keyword id="KW-0479">Metal-binding</keyword>
<keyword id="KW-0539">Nucleus</keyword>
<keyword id="KW-1185">Reference proteome</keyword>
<name>CAR11_ARATH</name>
<gene>
    <name evidence="5" type="primary">CAR11</name>
    <name evidence="6" type="ordered locus">At5g47710</name>
</gene>
<feature type="chain" id="PRO_0000434370" description="Protein C2-DOMAIN ABA-RELATED 11">
    <location>
        <begin position="1"/>
        <end position="166"/>
    </location>
</feature>
<feature type="initiator methionine" description="Removed; alternate" evidence="8">
    <location>
        <position position="1"/>
    </location>
</feature>
<feature type="chain" id="PRO_0000433321" description="Protein C2-DOMAIN ABA-RELATED 11, N-terminally processed">
    <location>
        <begin position="2"/>
        <end position="166"/>
    </location>
</feature>
<feature type="domain" description="C2" evidence="4">
    <location>
        <begin position="1"/>
        <end position="103"/>
    </location>
</feature>
<feature type="binding site" evidence="2">
    <location>
        <position position="21"/>
    </location>
    <ligand>
        <name>Ca(2+)</name>
        <dbReference type="ChEBI" id="CHEBI:29108"/>
        <label>1</label>
    </ligand>
</feature>
<feature type="binding site" evidence="2">
    <location>
        <position position="22"/>
    </location>
    <ligand>
        <name>Ca(2+)</name>
        <dbReference type="ChEBI" id="CHEBI:29108"/>
        <label>1</label>
    </ligand>
</feature>
<feature type="binding site" evidence="2">
    <location>
        <position position="22"/>
    </location>
    <ligand>
        <name>Ca(2+)</name>
        <dbReference type="ChEBI" id="CHEBI:29108"/>
        <label>2</label>
    </ligand>
</feature>
<feature type="binding site" evidence="2">
    <location>
        <position position="27"/>
    </location>
    <ligand>
        <name>Ca(2+)</name>
        <dbReference type="ChEBI" id="CHEBI:29108"/>
        <label>2</label>
    </ligand>
</feature>
<feature type="binding site" evidence="2">
    <location>
        <position position="73"/>
    </location>
    <ligand>
        <name>Ca(2+)</name>
        <dbReference type="ChEBI" id="CHEBI:29108"/>
        <label>1</label>
    </ligand>
</feature>
<feature type="binding site" evidence="2">
    <location>
        <position position="73"/>
    </location>
    <ligand>
        <name>Ca(2+)</name>
        <dbReference type="ChEBI" id="CHEBI:29108"/>
        <label>2</label>
    </ligand>
</feature>
<feature type="binding site" evidence="2">
    <location>
        <position position="74"/>
    </location>
    <ligand>
        <name>Ca(2+)</name>
        <dbReference type="ChEBI" id="CHEBI:29108"/>
        <label>2</label>
    </ligand>
</feature>
<feature type="binding site" evidence="2">
    <location>
        <position position="75"/>
    </location>
    <ligand>
        <name>Ca(2+)</name>
        <dbReference type="ChEBI" id="CHEBI:29108"/>
        <label>1</label>
    </ligand>
</feature>
<feature type="binding site" evidence="2">
    <location>
        <position position="75"/>
    </location>
    <ligand>
        <name>Ca(2+)</name>
        <dbReference type="ChEBI" id="CHEBI:29108"/>
        <label>2</label>
    </ligand>
</feature>
<feature type="binding site" evidence="2">
    <location>
        <position position="81"/>
    </location>
    <ligand>
        <name>Ca(2+)</name>
        <dbReference type="ChEBI" id="CHEBI:29108"/>
        <label>1</label>
    </ligand>
</feature>
<feature type="modified residue" description="N-acetylmethionine" evidence="3">
    <location>
        <position position="1"/>
    </location>
</feature>
<feature type="modified residue" description="N-acetylglycine; in Protein C2-DOMAIN ABA-RELATED 11, N-terminally processed" evidence="8">
    <location>
        <position position="2"/>
    </location>
</feature>
<comment type="function">
    <text evidence="1 2">Stimulates the GTPase/ATPase activities of Obg-like ATPases (By similarity). Mediates the transient calcium-dependent interaction of PYR/PYL/RCAR abscisic acid (ABA) receptors with the plasma membrane and thus regulates ABA sensitivity (By similarity).</text>
</comment>
<comment type="subunit">
    <text evidence="1">Binds to PYR/PYL/RCAR abscisic acid intracellular receptors in an ABA-independent manner, both at the plasma membrane and in the nucleus.</text>
</comment>
<comment type="subcellular location">
    <subcellularLocation>
        <location evidence="1">Cell membrane</location>
    </subcellularLocation>
    <subcellularLocation>
        <location evidence="1">Nucleus</location>
    </subcellularLocation>
</comment>
<comment type="similarity">
    <text evidence="5">Belongs to the plant CAR protein family.</text>
</comment>
<organism evidence="7">
    <name type="scientific">Arabidopsis thaliana</name>
    <name type="common">Mouse-ear cress</name>
    <dbReference type="NCBI Taxonomy" id="3702"/>
    <lineage>
        <taxon>Eukaryota</taxon>
        <taxon>Viridiplantae</taxon>
        <taxon>Streptophyta</taxon>
        <taxon>Embryophyta</taxon>
        <taxon>Tracheophyta</taxon>
        <taxon>Spermatophyta</taxon>
        <taxon>Magnoliopsida</taxon>
        <taxon>eudicotyledons</taxon>
        <taxon>Gunneridae</taxon>
        <taxon>Pentapetalae</taxon>
        <taxon>rosids</taxon>
        <taxon>malvids</taxon>
        <taxon>Brassicales</taxon>
        <taxon>Brassicaceae</taxon>
        <taxon>Camelineae</taxon>
        <taxon>Arabidopsis</taxon>
    </lineage>
</organism>
<sequence length="166" mass="18335">MGEPLGLLQVTVIQGKKLVIRDFKSSDPYVIVKLGNESAKTKVINNCLNPVWNEELNFTLKDPAAVLALEVFDKDRFKADDKMGHASLSLQPLISVARLRHVVRVSSGETTLRKVLPDPENCVSRESTISCIDGEVVQSVWLRLCAVESGEIELKIKLIDPPGTNK</sequence>
<proteinExistence type="evidence at protein level"/>
<protein>
    <recommendedName>
        <fullName evidence="5">Protein C2-DOMAIN ABA-RELATED 11</fullName>
    </recommendedName>
    <component>
        <recommendedName>
            <fullName>Protein C2-DOMAIN ABA-RELATED 11, N-terminally processed</fullName>
        </recommendedName>
    </component>
</protein>
<dbReference type="EMBL" id="AB016886">
    <property type="protein sequence ID" value="BAB11318.1"/>
    <property type="molecule type" value="Genomic_DNA"/>
</dbReference>
<dbReference type="EMBL" id="CP002688">
    <property type="protein sequence ID" value="AED95556.1"/>
    <property type="molecule type" value="Genomic_DNA"/>
</dbReference>
<dbReference type="EMBL" id="CP002688">
    <property type="protein sequence ID" value="AED95557.1"/>
    <property type="molecule type" value="Genomic_DNA"/>
</dbReference>
<dbReference type="EMBL" id="CP002688">
    <property type="protein sequence ID" value="ANM70730.1"/>
    <property type="molecule type" value="Genomic_DNA"/>
</dbReference>
<dbReference type="EMBL" id="CP002688">
    <property type="protein sequence ID" value="ANM70731.1"/>
    <property type="molecule type" value="Genomic_DNA"/>
</dbReference>
<dbReference type="EMBL" id="BT004766">
    <property type="protein sequence ID" value="AAO44032.1"/>
    <property type="molecule type" value="mRNA"/>
</dbReference>
<dbReference type="EMBL" id="AK227919">
    <property type="protein sequence ID" value="BAE99889.1"/>
    <property type="molecule type" value="mRNA"/>
</dbReference>
<dbReference type="EMBL" id="AY087150">
    <property type="protein sequence ID" value="AAM64708.1"/>
    <property type="molecule type" value="mRNA"/>
</dbReference>
<dbReference type="RefSeq" id="NP_001078729.1">
    <property type="nucleotide sequence ID" value="NM_001085260.2"/>
</dbReference>
<dbReference type="RefSeq" id="NP_001332315.1">
    <property type="nucleotide sequence ID" value="NM_001344743.1"/>
</dbReference>
<dbReference type="RefSeq" id="NP_001332316.1">
    <property type="nucleotide sequence ID" value="NM_001344742.1"/>
</dbReference>
<dbReference type="RefSeq" id="NP_199582.1">
    <property type="nucleotide sequence ID" value="NM_124145.3"/>
</dbReference>
<dbReference type="SMR" id="Q9FIK8"/>
<dbReference type="FunCoup" id="Q9FIK8">
    <property type="interactions" value="301"/>
</dbReference>
<dbReference type="STRING" id="3702.Q9FIK8"/>
<dbReference type="iPTMnet" id="Q9FIK8"/>
<dbReference type="PaxDb" id="3702-AT5G47710.2"/>
<dbReference type="ProteomicsDB" id="239194"/>
<dbReference type="EnsemblPlants" id="AT5G47710.1">
    <property type="protein sequence ID" value="AT5G47710.1"/>
    <property type="gene ID" value="AT5G47710"/>
</dbReference>
<dbReference type="EnsemblPlants" id="AT5G47710.2">
    <property type="protein sequence ID" value="AT5G47710.2"/>
    <property type="gene ID" value="AT5G47710"/>
</dbReference>
<dbReference type="EnsemblPlants" id="AT5G47710.3">
    <property type="protein sequence ID" value="AT5G47710.3"/>
    <property type="gene ID" value="AT5G47710"/>
</dbReference>
<dbReference type="EnsemblPlants" id="AT5G47710.4">
    <property type="protein sequence ID" value="AT5G47710.4"/>
    <property type="gene ID" value="AT5G47710"/>
</dbReference>
<dbReference type="GeneID" id="834822"/>
<dbReference type="Gramene" id="AT5G47710.1">
    <property type="protein sequence ID" value="AT5G47710.1"/>
    <property type="gene ID" value="AT5G47710"/>
</dbReference>
<dbReference type="Gramene" id="AT5G47710.2">
    <property type="protein sequence ID" value="AT5G47710.2"/>
    <property type="gene ID" value="AT5G47710"/>
</dbReference>
<dbReference type="Gramene" id="AT5G47710.3">
    <property type="protein sequence ID" value="AT5G47710.3"/>
    <property type="gene ID" value="AT5G47710"/>
</dbReference>
<dbReference type="Gramene" id="AT5G47710.4">
    <property type="protein sequence ID" value="AT5G47710.4"/>
    <property type="gene ID" value="AT5G47710"/>
</dbReference>
<dbReference type="KEGG" id="ath:AT5G47710"/>
<dbReference type="Araport" id="AT5G47710"/>
<dbReference type="TAIR" id="AT5G47710"/>
<dbReference type="eggNOG" id="KOG1030">
    <property type="taxonomic scope" value="Eukaryota"/>
</dbReference>
<dbReference type="HOGENOM" id="CLU_106037_0_0_1"/>
<dbReference type="InParanoid" id="Q9FIK8"/>
<dbReference type="OMA" id="TRVINSC"/>
<dbReference type="PhylomeDB" id="Q9FIK8"/>
<dbReference type="PRO" id="PR:Q9FIK8"/>
<dbReference type="Proteomes" id="UP000006548">
    <property type="component" value="Chromosome 5"/>
</dbReference>
<dbReference type="ExpressionAtlas" id="Q9FIK8">
    <property type="expression patterns" value="baseline and differential"/>
</dbReference>
<dbReference type="GO" id="GO:0005634">
    <property type="term" value="C:nucleus"/>
    <property type="evidence" value="ECO:0000250"/>
    <property type="project" value="UniProtKB"/>
</dbReference>
<dbReference type="GO" id="GO:0000325">
    <property type="term" value="C:plant-type vacuole"/>
    <property type="evidence" value="ECO:0007005"/>
    <property type="project" value="TAIR"/>
</dbReference>
<dbReference type="GO" id="GO:0005886">
    <property type="term" value="C:plasma membrane"/>
    <property type="evidence" value="ECO:0007005"/>
    <property type="project" value="TAIR"/>
</dbReference>
<dbReference type="GO" id="GO:0009536">
    <property type="term" value="C:plastid"/>
    <property type="evidence" value="ECO:0007005"/>
    <property type="project" value="TAIR"/>
</dbReference>
<dbReference type="GO" id="GO:0005096">
    <property type="term" value="F:GTPase activator activity"/>
    <property type="evidence" value="ECO:0000250"/>
    <property type="project" value="UniProtKB"/>
</dbReference>
<dbReference type="GO" id="GO:0046872">
    <property type="term" value="F:metal ion binding"/>
    <property type="evidence" value="ECO:0007669"/>
    <property type="project" value="UniProtKB-KW"/>
</dbReference>
<dbReference type="GO" id="GO:0005543">
    <property type="term" value="F:phospholipid binding"/>
    <property type="evidence" value="ECO:0000250"/>
    <property type="project" value="UniProtKB"/>
</dbReference>
<dbReference type="GO" id="GO:0009738">
    <property type="term" value="P:abscisic acid-activated signaling pathway"/>
    <property type="evidence" value="ECO:0007669"/>
    <property type="project" value="UniProtKB-KW"/>
</dbReference>
<dbReference type="GO" id="GO:0009789">
    <property type="term" value="P:positive regulation of abscisic acid-activated signaling pathway"/>
    <property type="evidence" value="ECO:0000250"/>
    <property type="project" value="UniProtKB"/>
</dbReference>
<dbReference type="GO" id="GO:0043547">
    <property type="term" value="P:positive regulation of GTPase activity"/>
    <property type="evidence" value="ECO:0000250"/>
    <property type="project" value="UniProtKB"/>
</dbReference>
<dbReference type="CDD" id="cd04038">
    <property type="entry name" value="C2_ArfGAP"/>
    <property type="match status" value="1"/>
</dbReference>
<dbReference type="Gene3D" id="2.60.40.150">
    <property type="entry name" value="C2 domain"/>
    <property type="match status" value="1"/>
</dbReference>
<dbReference type="InterPro" id="IPR000008">
    <property type="entry name" value="C2_dom"/>
</dbReference>
<dbReference type="InterPro" id="IPR035892">
    <property type="entry name" value="C2_domain_sf"/>
</dbReference>
<dbReference type="InterPro" id="IPR044562">
    <property type="entry name" value="CAR1-11"/>
</dbReference>
<dbReference type="PANTHER" id="PTHR45933:SF6">
    <property type="entry name" value="PROTEIN C2-DOMAIN ABA-RELATED 11"/>
    <property type="match status" value="1"/>
</dbReference>
<dbReference type="PANTHER" id="PTHR45933">
    <property type="entry name" value="PROTEIN C2-DOMAIN ABA-RELATED 4"/>
    <property type="match status" value="1"/>
</dbReference>
<dbReference type="Pfam" id="PF00168">
    <property type="entry name" value="C2"/>
    <property type="match status" value="1"/>
</dbReference>
<dbReference type="PRINTS" id="PR00360">
    <property type="entry name" value="C2DOMAIN"/>
</dbReference>
<dbReference type="SMART" id="SM00239">
    <property type="entry name" value="C2"/>
    <property type="match status" value="1"/>
</dbReference>
<dbReference type="SUPFAM" id="SSF49562">
    <property type="entry name" value="C2 domain (Calcium/lipid-binding domain, CaLB)"/>
    <property type="match status" value="1"/>
</dbReference>
<dbReference type="PROSITE" id="PS50004">
    <property type="entry name" value="C2"/>
    <property type="match status" value="1"/>
</dbReference>
<reference key="1">
    <citation type="journal article" date="1998" name="DNA Res.">
        <title>Structural analysis of Arabidopsis thaliana chromosome 5. VIII. Sequence features of the regions of 1,081,958 bp covered by seventeen physically assigned P1 and TAC clones.</title>
        <authorList>
            <person name="Asamizu E."/>
            <person name="Sato S."/>
            <person name="Kaneko T."/>
            <person name="Nakamura Y."/>
            <person name="Kotani H."/>
            <person name="Miyajima N."/>
            <person name="Tabata S."/>
        </authorList>
    </citation>
    <scope>NUCLEOTIDE SEQUENCE [LARGE SCALE GENOMIC DNA]</scope>
    <source>
        <strain>cv. Columbia</strain>
    </source>
</reference>
<reference key="2">
    <citation type="journal article" date="2017" name="Plant J.">
        <title>Araport11: a complete reannotation of the Arabidopsis thaliana reference genome.</title>
        <authorList>
            <person name="Cheng C.Y."/>
            <person name="Krishnakumar V."/>
            <person name="Chan A.P."/>
            <person name="Thibaud-Nissen F."/>
            <person name="Schobel S."/>
            <person name="Town C.D."/>
        </authorList>
    </citation>
    <scope>GENOME REANNOTATION</scope>
    <source>
        <strain>cv. Columbia</strain>
    </source>
</reference>
<reference key="3">
    <citation type="journal article" date="2003" name="Science">
        <title>Empirical analysis of transcriptional activity in the Arabidopsis genome.</title>
        <authorList>
            <person name="Yamada K."/>
            <person name="Lim J."/>
            <person name="Dale J.M."/>
            <person name="Chen H."/>
            <person name="Shinn P."/>
            <person name="Palm C.J."/>
            <person name="Southwick A.M."/>
            <person name="Wu H.C."/>
            <person name="Kim C.J."/>
            <person name="Nguyen M."/>
            <person name="Pham P.K."/>
            <person name="Cheuk R.F."/>
            <person name="Karlin-Newmann G."/>
            <person name="Liu S.X."/>
            <person name="Lam B."/>
            <person name="Sakano H."/>
            <person name="Wu T."/>
            <person name="Yu G."/>
            <person name="Miranda M."/>
            <person name="Quach H.L."/>
            <person name="Tripp M."/>
            <person name="Chang C.H."/>
            <person name="Lee J.M."/>
            <person name="Toriumi M.J."/>
            <person name="Chan M.M."/>
            <person name="Tang C.C."/>
            <person name="Onodera C.S."/>
            <person name="Deng J.M."/>
            <person name="Akiyama K."/>
            <person name="Ansari Y."/>
            <person name="Arakawa T."/>
            <person name="Banh J."/>
            <person name="Banno F."/>
            <person name="Bowser L."/>
            <person name="Brooks S.Y."/>
            <person name="Carninci P."/>
            <person name="Chao Q."/>
            <person name="Choy N."/>
            <person name="Enju A."/>
            <person name="Goldsmith A.D."/>
            <person name="Gurjal M."/>
            <person name="Hansen N.F."/>
            <person name="Hayashizaki Y."/>
            <person name="Johnson-Hopson C."/>
            <person name="Hsuan V.W."/>
            <person name="Iida K."/>
            <person name="Karnes M."/>
            <person name="Khan S."/>
            <person name="Koesema E."/>
            <person name="Ishida J."/>
            <person name="Jiang P.X."/>
            <person name="Jones T."/>
            <person name="Kawai J."/>
            <person name="Kamiya A."/>
            <person name="Meyers C."/>
            <person name="Nakajima M."/>
            <person name="Narusaka M."/>
            <person name="Seki M."/>
            <person name="Sakurai T."/>
            <person name="Satou M."/>
            <person name="Tamse R."/>
            <person name="Vaysberg M."/>
            <person name="Wallender E.K."/>
            <person name="Wong C."/>
            <person name="Yamamura Y."/>
            <person name="Yuan S."/>
            <person name="Shinozaki K."/>
            <person name="Davis R.W."/>
            <person name="Theologis A."/>
            <person name="Ecker J.R."/>
        </authorList>
    </citation>
    <scope>NUCLEOTIDE SEQUENCE [LARGE SCALE MRNA]</scope>
    <source>
        <strain>cv. Columbia</strain>
    </source>
</reference>
<reference key="4">
    <citation type="submission" date="2006-07" db="EMBL/GenBank/DDBJ databases">
        <title>Large-scale analysis of RIKEN Arabidopsis full-length (RAFL) cDNAs.</title>
        <authorList>
            <person name="Totoki Y."/>
            <person name="Seki M."/>
            <person name="Ishida J."/>
            <person name="Nakajima M."/>
            <person name="Enju A."/>
            <person name="Kamiya A."/>
            <person name="Narusaka M."/>
            <person name="Shin-i T."/>
            <person name="Nakagawa M."/>
            <person name="Sakamoto N."/>
            <person name="Oishi K."/>
            <person name="Kohara Y."/>
            <person name="Kobayashi M."/>
            <person name="Toyoda A."/>
            <person name="Sakaki Y."/>
            <person name="Sakurai T."/>
            <person name="Iida K."/>
            <person name="Akiyama K."/>
            <person name="Satou M."/>
            <person name="Toyoda T."/>
            <person name="Konagaya A."/>
            <person name="Carninci P."/>
            <person name="Kawai J."/>
            <person name="Hayashizaki Y."/>
            <person name="Shinozaki K."/>
        </authorList>
    </citation>
    <scope>NUCLEOTIDE SEQUENCE [LARGE SCALE MRNA]</scope>
    <source>
        <strain>cv. Columbia</strain>
    </source>
</reference>
<reference key="5">
    <citation type="submission" date="2002-03" db="EMBL/GenBank/DDBJ databases">
        <title>Full-length cDNA from Arabidopsis thaliana.</title>
        <authorList>
            <person name="Brover V.V."/>
            <person name="Troukhan M.E."/>
            <person name="Alexandrov N.A."/>
            <person name="Lu Y.-P."/>
            <person name="Flavell R.B."/>
            <person name="Feldmann K.A."/>
        </authorList>
    </citation>
    <scope>NUCLEOTIDE SEQUENCE [LARGE SCALE MRNA]</scope>
</reference>
<reference key="6">
    <citation type="journal article" date="2012" name="Mol. Cell. Proteomics">
        <title>Comparative large-scale characterisation of plant vs. mammal proteins reveals similar and idiosyncratic N-alpha acetylation features.</title>
        <authorList>
            <person name="Bienvenut W.V."/>
            <person name="Sumpton D."/>
            <person name="Martinez A."/>
            <person name="Lilla S."/>
            <person name="Espagne C."/>
            <person name="Meinnel T."/>
            <person name="Giglione C."/>
        </authorList>
    </citation>
    <scope>ACETYLATION [LARGE SCALE ANALYSIS] AT GLY-2</scope>
    <scope>CLEAVAGE OF INITIATOR METHIONINE [LARGE SCALE ANALYSIS]</scope>
    <scope>IDENTIFICATION BY MASS SPECTROMETRY [LARGE SCALE ANALYSIS]</scope>
</reference>